<keyword id="KW-0030">Aminoacyl-tRNA synthetase</keyword>
<keyword id="KW-0067">ATP-binding</keyword>
<keyword id="KW-0963">Cytoplasm</keyword>
<keyword id="KW-0436">Ligase</keyword>
<keyword id="KW-0547">Nucleotide-binding</keyword>
<keyword id="KW-0648">Protein biosynthesis</keyword>
<keyword id="KW-1185">Reference proteome</keyword>
<protein>
    <recommendedName>
        <fullName evidence="1">Isoleucine--tRNA ligase</fullName>
        <ecNumber evidence="1">6.1.1.5</ecNumber>
    </recommendedName>
    <alternativeName>
        <fullName evidence="1">Isoleucyl-tRNA synthetase</fullName>
        <shortName evidence="1">IleRS</shortName>
    </alternativeName>
</protein>
<feature type="chain" id="PRO_0000098481" description="Isoleucine--tRNA ligase">
    <location>
        <begin position="1"/>
        <end position="933"/>
    </location>
</feature>
<feature type="short sequence motif" description="'HIGH' region">
    <location>
        <begin position="57"/>
        <end position="67"/>
    </location>
</feature>
<feature type="short sequence motif" description="'KMSKS' region">
    <location>
        <begin position="595"/>
        <end position="599"/>
    </location>
</feature>
<feature type="binding site" evidence="1">
    <location>
        <position position="554"/>
    </location>
    <ligand>
        <name>L-isoleucyl-5'-AMP</name>
        <dbReference type="ChEBI" id="CHEBI:178002"/>
    </ligand>
</feature>
<feature type="binding site" evidence="1">
    <location>
        <position position="598"/>
    </location>
    <ligand>
        <name>ATP</name>
        <dbReference type="ChEBI" id="CHEBI:30616"/>
    </ligand>
</feature>
<feature type="sequence conflict" description="In Ref. 2; AAZ51861." evidence="2" ref="2">
    <original>H</original>
    <variation>Y</variation>
    <location>
        <position position="773"/>
    </location>
</feature>
<organism>
    <name type="scientific">Streptococcus pyogenes serotype M1</name>
    <dbReference type="NCBI Taxonomy" id="301447"/>
    <lineage>
        <taxon>Bacteria</taxon>
        <taxon>Bacillati</taxon>
        <taxon>Bacillota</taxon>
        <taxon>Bacilli</taxon>
        <taxon>Lactobacillales</taxon>
        <taxon>Streptococcaceae</taxon>
        <taxon>Streptococcus</taxon>
    </lineage>
</organism>
<dbReference type="EC" id="6.1.1.5" evidence="1"/>
<dbReference type="EMBL" id="AE004092">
    <property type="protein sequence ID" value="AAK34309.1"/>
    <property type="molecule type" value="Genomic_DNA"/>
</dbReference>
<dbReference type="EMBL" id="CP000017">
    <property type="protein sequence ID" value="AAZ51861.1"/>
    <property type="molecule type" value="Genomic_DNA"/>
</dbReference>
<dbReference type="RefSeq" id="NP_269588.1">
    <property type="nucleotide sequence ID" value="NC_002737.2"/>
</dbReference>
<dbReference type="SMR" id="Q99YW3"/>
<dbReference type="ChEMBL" id="CHEMBL2364671"/>
<dbReference type="DrugCentral" id="Q99YW3"/>
<dbReference type="PaxDb" id="1314-HKU360_01285"/>
<dbReference type="KEGG" id="spy:SPy_1513"/>
<dbReference type="KEGG" id="spz:M5005_Spy1243"/>
<dbReference type="PATRIC" id="fig|160490.10.peg.1320"/>
<dbReference type="HOGENOM" id="CLU_001493_7_1_9"/>
<dbReference type="OMA" id="HCWRCKT"/>
<dbReference type="PRO" id="PR:Q99YW3"/>
<dbReference type="Proteomes" id="UP000000750">
    <property type="component" value="Chromosome"/>
</dbReference>
<dbReference type="GO" id="GO:0005829">
    <property type="term" value="C:cytosol"/>
    <property type="evidence" value="ECO:0007669"/>
    <property type="project" value="TreeGrafter"/>
</dbReference>
<dbReference type="GO" id="GO:0002161">
    <property type="term" value="F:aminoacyl-tRNA deacylase activity"/>
    <property type="evidence" value="ECO:0007669"/>
    <property type="project" value="InterPro"/>
</dbReference>
<dbReference type="GO" id="GO:0005524">
    <property type="term" value="F:ATP binding"/>
    <property type="evidence" value="ECO:0007669"/>
    <property type="project" value="UniProtKB-UniRule"/>
</dbReference>
<dbReference type="GO" id="GO:0004822">
    <property type="term" value="F:isoleucine-tRNA ligase activity"/>
    <property type="evidence" value="ECO:0007669"/>
    <property type="project" value="UniProtKB-UniRule"/>
</dbReference>
<dbReference type="GO" id="GO:0000049">
    <property type="term" value="F:tRNA binding"/>
    <property type="evidence" value="ECO:0007669"/>
    <property type="project" value="InterPro"/>
</dbReference>
<dbReference type="GO" id="GO:0006428">
    <property type="term" value="P:isoleucyl-tRNA aminoacylation"/>
    <property type="evidence" value="ECO:0007669"/>
    <property type="project" value="UniProtKB-UniRule"/>
</dbReference>
<dbReference type="CDD" id="cd07960">
    <property type="entry name" value="Anticodon_Ia_Ile_BEm"/>
    <property type="match status" value="1"/>
</dbReference>
<dbReference type="CDD" id="cd00818">
    <property type="entry name" value="IleRS_core"/>
    <property type="match status" value="1"/>
</dbReference>
<dbReference type="FunFam" id="1.10.10.830:FF:000001">
    <property type="entry name" value="Isoleucine--tRNA ligase"/>
    <property type="match status" value="1"/>
</dbReference>
<dbReference type="FunFam" id="1.10.730.20:FF:000001">
    <property type="entry name" value="Isoleucine--tRNA ligase"/>
    <property type="match status" value="1"/>
</dbReference>
<dbReference type="FunFam" id="3.40.50.620:FF:000092">
    <property type="entry name" value="Isoleucine--tRNA ligase"/>
    <property type="match status" value="1"/>
</dbReference>
<dbReference type="FunFam" id="3.90.740.10:FF:000006">
    <property type="entry name" value="Isoleucine--tRNA ligase"/>
    <property type="match status" value="1"/>
</dbReference>
<dbReference type="Gene3D" id="1.10.730.20">
    <property type="match status" value="1"/>
</dbReference>
<dbReference type="Gene3D" id="3.40.50.620">
    <property type="entry name" value="HUPs"/>
    <property type="match status" value="2"/>
</dbReference>
<dbReference type="Gene3D" id="1.10.10.830">
    <property type="entry name" value="Ile-tRNA synthetase CP2 domain-like"/>
    <property type="match status" value="1"/>
</dbReference>
<dbReference type="HAMAP" id="MF_02002">
    <property type="entry name" value="Ile_tRNA_synth_type1"/>
    <property type="match status" value="1"/>
</dbReference>
<dbReference type="InterPro" id="IPR001412">
    <property type="entry name" value="aa-tRNA-synth_I_CS"/>
</dbReference>
<dbReference type="InterPro" id="IPR002300">
    <property type="entry name" value="aa-tRNA-synth_Ia"/>
</dbReference>
<dbReference type="InterPro" id="IPR033708">
    <property type="entry name" value="Anticodon_Ile_BEm"/>
</dbReference>
<dbReference type="InterPro" id="IPR002301">
    <property type="entry name" value="Ile-tRNA-ligase"/>
</dbReference>
<dbReference type="InterPro" id="IPR023585">
    <property type="entry name" value="Ile-tRNA-ligase_type1"/>
</dbReference>
<dbReference type="InterPro" id="IPR050081">
    <property type="entry name" value="Ile-tRNA_ligase"/>
</dbReference>
<dbReference type="InterPro" id="IPR013155">
    <property type="entry name" value="M/V/L/I-tRNA-synth_anticd-bd"/>
</dbReference>
<dbReference type="InterPro" id="IPR014729">
    <property type="entry name" value="Rossmann-like_a/b/a_fold"/>
</dbReference>
<dbReference type="InterPro" id="IPR009080">
    <property type="entry name" value="tRNAsynth_Ia_anticodon-bd"/>
</dbReference>
<dbReference type="InterPro" id="IPR009008">
    <property type="entry name" value="Val/Leu/Ile-tRNA-synth_edit"/>
</dbReference>
<dbReference type="NCBIfam" id="TIGR00392">
    <property type="entry name" value="ileS"/>
    <property type="match status" value="1"/>
</dbReference>
<dbReference type="PANTHER" id="PTHR42765:SF1">
    <property type="entry name" value="ISOLEUCINE--TRNA LIGASE, MITOCHONDRIAL"/>
    <property type="match status" value="1"/>
</dbReference>
<dbReference type="PANTHER" id="PTHR42765">
    <property type="entry name" value="SOLEUCYL-TRNA SYNTHETASE"/>
    <property type="match status" value="1"/>
</dbReference>
<dbReference type="Pfam" id="PF08264">
    <property type="entry name" value="Anticodon_1"/>
    <property type="match status" value="1"/>
</dbReference>
<dbReference type="Pfam" id="PF00133">
    <property type="entry name" value="tRNA-synt_1"/>
    <property type="match status" value="1"/>
</dbReference>
<dbReference type="PRINTS" id="PR00984">
    <property type="entry name" value="TRNASYNTHILE"/>
</dbReference>
<dbReference type="SUPFAM" id="SSF47323">
    <property type="entry name" value="Anticodon-binding domain of a subclass of class I aminoacyl-tRNA synthetases"/>
    <property type="match status" value="1"/>
</dbReference>
<dbReference type="SUPFAM" id="SSF52374">
    <property type="entry name" value="Nucleotidylyl transferase"/>
    <property type="match status" value="1"/>
</dbReference>
<dbReference type="SUPFAM" id="SSF50677">
    <property type="entry name" value="ValRS/IleRS/LeuRS editing domain"/>
    <property type="match status" value="1"/>
</dbReference>
<dbReference type="PROSITE" id="PS00178">
    <property type="entry name" value="AA_TRNA_LIGASE_I"/>
    <property type="match status" value="1"/>
</dbReference>
<sequence>MKLKETLNLGKTAFPMRAGLPNKEPQWQAAWEQAELYKKRQELNAGKPAFHLHDGPPYANGNIHVGHALNKISKDIIVRSKSMSGFQAPYVPGWDTHGLPIEQVLAKQGIKRKEMDLAEYLEMCRQYALSQVDKQRDDFKRLGVSADWENPYVTLDPQFEADQIRVFGAMAEKGYIYRGAKPVYWSWSSESALAEAEIEYHDIDSTSLYYANKVKDGKGILDTNTYIVVWTTTPFTVTASRGLTVGPDMDYLVVKPAGSDRQYVVAEGLLDSLAGKFGWESFETLASHKGADLEYIVTEHPWDTDVEELVILGDHVTLESGTGIVHTAPGFGEDDYNVGTKYKLEVAVTVDERGLMMENAGPDFHGQFYNKVTPIVIDKLGDLLLAQEVINHSYPFDWRTKKPIIWRAVPQWFASVSDFRQDILDEIEKTTFHPSWGETRLYNMIRDRGDWVISRQRAWGVPLPIFYAEDGTAIMTKEVTDHVADLFQENGSIIWWQKEAKDLLPEGFTHPGSPNGEFTKETDIMDVWFDSGSSWNGVMNTKENLSYPADLYLEGSDQYRGWFNSSLITSVAVNGHAPYKAILSQGFVLDGKGEKMSKSKGNIISPNDVAKQYGADILRLWVASVDTDNDVRVSMEILGQVSETYRKIRNTLRFLIANTSDFNPATDTVAYADLGTVDKYMTIVFNQLVATITDAYERYDFMAIYKAVVNFVTVDLSAFYLDFAKDVVYIEAANSLERRRMQTVFYDILVKITKLLTPILPHTTEEIWSYLEHESEAFVQLAEMPVAETFSAQEDILEAWSAFMTLRTQAQKALEEARNAKIIGKSLEAHLTIYASEEVKTLLTALDSDIALLLIVSQLTIADLADAPADAVAFEGVAFIVEHAIGEVCERSRRIDPTTRMRSYNAFVCDHSAKIIEENFPEAVAEGFEESGK</sequence>
<gene>
    <name evidence="1" type="primary">ileS</name>
    <name type="ordered locus">SPy_1513</name>
    <name type="ordered locus">M5005_Spy1243</name>
</gene>
<comment type="function">
    <text evidence="1">Catalyzes the attachment of isoleucine to tRNA(Ile). As IleRS can inadvertently accommodate and process structurally similar amino acids such as valine, to avoid such errors it has two additional distinct tRNA(Ile)-dependent editing activities. One activity is designated as 'pretransfer' editing and involves the hydrolysis of activated Val-AMP. The other activity is designated 'posttransfer' editing and involves deacylation of mischarged Val-tRNA(Ile).</text>
</comment>
<comment type="catalytic activity">
    <reaction evidence="1">
        <text>tRNA(Ile) + L-isoleucine + ATP = L-isoleucyl-tRNA(Ile) + AMP + diphosphate</text>
        <dbReference type="Rhea" id="RHEA:11060"/>
        <dbReference type="Rhea" id="RHEA-COMP:9666"/>
        <dbReference type="Rhea" id="RHEA-COMP:9695"/>
        <dbReference type="ChEBI" id="CHEBI:30616"/>
        <dbReference type="ChEBI" id="CHEBI:33019"/>
        <dbReference type="ChEBI" id="CHEBI:58045"/>
        <dbReference type="ChEBI" id="CHEBI:78442"/>
        <dbReference type="ChEBI" id="CHEBI:78528"/>
        <dbReference type="ChEBI" id="CHEBI:456215"/>
        <dbReference type="EC" id="6.1.1.5"/>
    </reaction>
</comment>
<comment type="subunit">
    <text evidence="1">Monomer.</text>
</comment>
<comment type="subcellular location">
    <subcellularLocation>
        <location evidence="1">Cytoplasm</location>
    </subcellularLocation>
</comment>
<comment type="domain">
    <text evidence="1">IleRS has two distinct active sites: one for aminoacylation and one for editing. The misactivated valine is translocated from the active site to the editing site, which sterically excludes the correctly activated isoleucine. The single editing site contains two valyl binding pockets, one specific for each substrate (Val-AMP or Val-tRNA(Ile)).</text>
</comment>
<comment type="similarity">
    <text evidence="1">Belongs to the class-I aminoacyl-tRNA synthetase family. IleS type 1 subfamily.</text>
</comment>
<name>SYI_STRP1</name>
<reference key="1">
    <citation type="journal article" date="2001" name="Proc. Natl. Acad. Sci. U.S.A.">
        <title>Complete genome sequence of an M1 strain of Streptococcus pyogenes.</title>
        <authorList>
            <person name="Ferretti J.J."/>
            <person name="McShan W.M."/>
            <person name="Ajdic D.J."/>
            <person name="Savic D.J."/>
            <person name="Savic G."/>
            <person name="Lyon K."/>
            <person name="Primeaux C."/>
            <person name="Sezate S."/>
            <person name="Suvorov A.N."/>
            <person name="Kenton S."/>
            <person name="Lai H.S."/>
            <person name="Lin S.P."/>
            <person name="Qian Y."/>
            <person name="Jia H.G."/>
            <person name="Najar F.Z."/>
            <person name="Ren Q."/>
            <person name="Zhu H."/>
            <person name="Song L."/>
            <person name="White J."/>
            <person name="Yuan X."/>
            <person name="Clifton S.W."/>
            <person name="Roe B.A."/>
            <person name="McLaughlin R.E."/>
        </authorList>
    </citation>
    <scope>NUCLEOTIDE SEQUENCE [LARGE SCALE GENOMIC DNA]</scope>
    <source>
        <strain>ATCC 700294 / SF370 / Serotype M1</strain>
    </source>
</reference>
<reference key="2">
    <citation type="journal article" date="2005" name="J. Infect. Dis.">
        <title>Evolutionary origin and emergence of a highly successful clone of serotype M1 group A Streptococcus involved multiple horizontal gene transfer events.</title>
        <authorList>
            <person name="Sumby P."/>
            <person name="Porcella S.F."/>
            <person name="Madrigal A.G."/>
            <person name="Barbian K.D."/>
            <person name="Virtaneva K."/>
            <person name="Ricklefs S.M."/>
            <person name="Sturdevant D.E."/>
            <person name="Graham M.R."/>
            <person name="Vuopio-Varkila J."/>
            <person name="Hoe N.P."/>
            <person name="Musser J.M."/>
        </authorList>
    </citation>
    <scope>NUCLEOTIDE SEQUENCE [LARGE SCALE GENOMIC DNA]</scope>
    <source>
        <strain>ATCC BAA-947 / MGAS5005 / Serotype M1</strain>
    </source>
</reference>
<proteinExistence type="inferred from homology"/>
<accession>Q99YW3</accession>
<accession>Q48XR4</accession>
<evidence type="ECO:0000255" key="1">
    <source>
        <dbReference type="HAMAP-Rule" id="MF_02002"/>
    </source>
</evidence>
<evidence type="ECO:0000305" key="2"/>